<keyword id="KW-0963">Cytoplasm</keyword>
<keyword id="KW-0206">Cytoskeleton</keyword>
<keyword id="KW-0903">Direct protein sequencing</keyword>
<keyword id="KW-0342">GTP-binding</keyword>
<keyword id="KW-0493">Microtubule</keyword>
<keyword id="KW-0547">Nucleotide-binding</keyword>
<keyword id="KW-0597">Phosphoprotein</keyword>
<keyword id="KW-1185">Reference proteome</keyword>
<feature type="chain" id="PRO_0000048466" description="Tubulin gamma-1 chain">
    <location>
        <begin position="1"/>
        <end position="451"/>
    </location>
</feature>
<feature type="binding site" evidence="3">
    <location>
        <begin position="142"/>
        <end position="148"/>
    </location>
    <ligand>
        <name>GTP</name>
        <dbReference type="ChEBI" id="CHEBI:37565"/>
    </ligand>
</feature>
<feature type="modified residue" description="Phosphoserine; by BRSK1" evidence="5">
    <location>
        <position position="131"/>
    </location>
</feature>
<feature type="mutagenesis site" description="Weak effect possibly due to low expression of this mutant." evidence="5">
    <original>S</original>
    <variation>A</variation>
    <location>
        <position position="131"/>
    </location>
</feature>
<feature type="mutagenesis site" description="Phosphomimetic mutant that lead to increased centrosome number." evidence="5">
    <original>S</original>
    <variation>D</variation>
    <location>
        <position position="131"/>
    </location>
</feature>
<protein>
    <recommendedName>
        <fullName evidence="7">Tubulin gamma-1 chain</fullName>
    </recommendedName>
    <alternativeName>
        <fullName>Gamma-1-tubulin</fullName>
    </alternativeName>
    <alternativeName>
        <fullName>Gamma-tubulin complex component 1</fullName>
        <shortName>GCP-1</shortName>
    </alternativeName>
</protein>
<sequence>MPREIITLQLGQCGNQIGFEFWKQLCAEHGISPEGIVEEFATEGTDRKDVFFYQADDEHYIPRAVLLDLEPRVIHSILNSSYAKLYNPENIYLSEHGGGAGNNWASGFSQGEKIHEDIFDIIDREADGSDSLEGFVLCHSIAGGTGSGLGSYLLERLNDRYPKKLVQTYSVFPNQDEMSDVVVQPYNSLLTLKRLTQNADCVVVLDNTALNLIATDRLHIQNPSFSQINQLVSTIMSASTTTLRYPGYMNNDLIGLIASLIPTPRLHFLMTGYTPLTTDQSVASVRKTTVLDVMRRLLQPKNVMVSTGRDRQTNHCYIAILNIIQGEVDPTQVHKSLQRIRERKLANFIPWGPASIQVALSRKSPYLPSAHRVSGLMMANHTSISSLFERTCRQFDKLRKREAFMEQFRKEDIFKDNFDEMDTSREIVQQLIDEYHAATRPDYISWGTQEQ</sequence>
<gene>
    <name evidence="8" type="primary">Tubg1</name>
    <name type="synonym">Tubg</name>
</gene>
<comment type="function">
    <text evidence="1">Tubulin is the major constituent of microtubules, protein filaments consisting of alpha- and beta-tubulin heterodimers (By similarity). Gamma-tubulin is a key component of the gamma-tubulin ring complex (gTuRC) which mediates microtubule nucleation (By similarity). The gTuRC regulates the minus-end nucleation of alpha-beta tubulin heterodimers that grow into microtubule protafilaments, a critical step in centrosome duplication and spindle formation (By similarity).</text>
</comment>
<comment type="subunit">
    <text evidence="1 2 4 6">Component of the gamma-tubulin ring complex (gTuRC) consisting of TUBGCP2, TUBGCP3, TUBGCP4, TUBGCP5 and TUBGCP6 and gamma-tubulin TUBG1 or TUBG2 (By similarity). TUBGCP2, TUBGCP3, TUBGCP4, TUBGCP5 and TUBGCP6 assemble in a 5:5:2:1:1 stoichiometry; each is associated with a gamma-tubulin, thereby arranging 14 gamma-tubulins in a helical manner (By similarity). Gamma-tubulin at the first position is blocked by TUBGCP3 at the last position, allowing 13 protafilaments to grow into a microtubule (By similarity). The gTuRC (via TUBGCP3 and TUBGCP6) interacts with ACTB and MZT1; the interactions form a luminal bridge that stabilizes the initial structure during complex assembly (By similarity). The gTuRC (via TUBGCP2) interacts with MZT2A/MZT2B and CDK5RAP2 (via CM1 motif); the interactions play a role in gTuRC activation (By similarity). Interacts with alpha-beta tubulin heterodimers; the interaction allows microtubules to nucleate from the gTuRC (By similarity). Interacts with B9D2 (PubMed:18287022). Interacts with CDK5RAP2; the interaction is leading to centrosomal localization of TUBG1 and CDK5RAP2 (By similarity). Interacts with CIMAP3 (PubMed:20643351). Interacts with SAS6 and NUP62 at the centrosome (By similarity). Interacts with EML3 (phosphorylated at 'Thr-881') and HAUS8 (By similarity). Interacts with DNM2; this interaction may participate in centrosome cohesion (By similarity). Interacts with CCDC66 (By similarity).</text>
</comment>
<comment type="subcellular location">
    <subcellularLocation>
        <location evidence="5">Cytoplasm</location>
        <location evidence="5">Cytoskeleton</location>
        <location evidence="5">Microtubule organizing center</location>
        <location evidence="5">Centrosome</location>
    </subcellularLocation>
    <subcellularLocation>
        <location evidence="1">Cytoplasm</location>
        <location evidence="1">Cytoskeleton</location>
        <location evidence="1">Spindle</location>
    </subcellularLocation>
    <text evidence="1 5">Mainly localizes to the centrosome, but a fraction is found outside of the centrosome in the cytoplasm (PubMed:19648910). Localizes to mitotic spindle microtubules (By similarity).</text>
</comment>
<comment type="PTM">
    <text evidence="5">Phosphorylation at Ser-131 by BRSK1 regulates centrosome duplication, possibly by mediating relocation of gamma-tubulin and its associated proteins from the cytoplasm to the centrosome.</text>
</comment>
<comment type="similarity">
    <text evidence="7">Belongs to the tubulin family.</text>
</comment>
<accession>P83887</accession>
<accession>Q9Z310</accession>
<organism>
    <name type="scientific">Mus musculus</name>
    <name type="common">Mouse</name>
    <dbReference type="NCBI Taxonomy" id="10090"/>
    <lineage>
        <taxon>Eukaryota</taxon>
        <taxon>Metazoa</taxon>
        <taxon>Chordata</taxon>
        <taxon>Craniata</taxon>
        <taxon>Vertebrata</taxon>
        <taxon>Euteleostomi</taxon>
        <taxon>Mammalia</taxon>
        <taxon>Eutheria</taxon>
        <taxon>Euarchontoglires</taxon>
        <taxon>Glires</taxon>
        <taxon>Rodentia</taxon>
        <taxon>Myomorpha</taxon>
        <taxon>Muroidea</taxon>
        <taxon>Muridae</taxon>
        <taxon>Murinae</taxon>
        <taxon>Mus</taxon>
        <taxon>Mus</taxon>
    </lineage>
</organism>
<reference key="1">
    <citation type="journal article" date="2004" name="Genome Res.">
        <title>The status, quality, and expansion of the NIH full-length cDNA project: the Mammalian Gene Collection (MGC).</title>
        <authorList>
            <consortium name="The MGC Project Team"/>
        </authorList>
    </citation>
    <scope>NUCLEOTIDE SEQUENCE [LARGE SCALE MRNA]</scope>
    <source>
        <tissue>Mammary gland</tissue>
    </source>
</reference>
<reference key="2">
    <citation type="submission" date="2009-01" db="UniProtKB">
        <authorList>
            <person name="Lubec G."/>
            <person name="Sunyer B."/>
            <person name="Chen W.-Q."/>
        </authorList>
    </citation>
    <scope>PROTEIN SEQUENCE OF 49-84; 195-217 AND 416-425</scope>
    <scope>IDENTIFICATION BY MASS SPECTROMETRY</scope>
    <source>
        <strain>OF1</strain>
        <tissue>Hippocampus</tissue>
    </source>
</reference>
<reference key="3">
    <citation type="journal article" date="2008" name="Proc. Natl. Acad. Sci. U.S.A.">
        <title>The stumpy gene is required for mammalian ciliogenesis.</title>
        <authorList>
            <person name="Town T."/>
            <person name="Breunig J.J."/>
            <person name="Sarkisian M.R."/>
            <person name="Spilianakis C."/>
            <person name="Ayoub A.E."/>
            <person name="Liu X."/>
            <person name="Ferrandino A.F."/>
            <person name="Gallagher A.R."/>
            <person name="Li M.O."/>
            <person name="Rakic P."/>
            <person name="Flavell R.A."/>
        </authorList>
    </citation>
    <scope>INTERACTION WITH B9D2</scope>
</reference>
<reference key="4">
    <citation type="journal article" date="2009" name="Nat. Cell Biol.">
        <title>SADB phosphorylation of gamma-tubulin regulates centrosome duplication.</title>
        <authorList>
            <person name="Alvarado-Kristensson M."/>
            <person name="Rodriguez M.J."/>
            <person name="Silio V."/>
            <person name="Valpuesta J.M."/>
            <person name="Carrera A.C."/>
        </authorList>
    </citation>
    <scope>SUBCELLULAR LOCATION</scope>
    <scope>PHOSPHORYLATION AT SER-131</scope>
    <scope>MUTAGENESIS OF SER-131</scope>
</reference>
<reference key="5">
    <citation type="journal article" date="2010" name="Cell">
        <title>A tissue-specific atlas of mouse protein phosphorylation and expression.</title>
        <authorList>
            <person name="Huttlin E.L."/>
            <person name="Jedrychowski M.P."/>
            <person name="Elias J.E."/>
            <person name="Goswami T."/>
            <person name="Rad R."/>
            <person name="Beausoleil S.A."/>
            <person name="Villen J."/>
            <person name="Haas W."/>
            <person name="Sowa M.E."/>
            <person name="Gygi S.P."/>
        </authorList>
    </citation>
    <scope>IDENTIFICATION BY MASS SPECTROMETRY [LARGE SCALE ANALYSIS]</scope>
    <source>
        <tissue>Brain</tissue>
        <tissue>Brown adipose tissue</tissue>
        <tissue>Lung</tissue>
        <tissue>Spleen</tissue>
        <tissue>Testis</tissue>
    </source>
</reference>
<reference key="6">
    <citation type="journal article" date="2010" name="Dev. Cell">
        <title>Pitchfork regulates primary cilia disassembly and left-right asymmetry.</title>
        <authorList>
            <person name="Kinzel D."/>
            <person name="Boldt K."/>
            <person name="Davis E.E."/>
            <person name="Burtscher I."/>
            <person name="Trumbach D."/>
            <person name="Diplas B."/>
            <person name="Attie-Bitach T."/>
            <person name="Wurst W."/>
            <person name="Katsanis N."/>
            <person name="Ueffing M."/>
            <person name="Lickert H."/>
        </authorList>
    </citation>
    <scope>INTERACTION WITH CIMAP3</scope>
</reference>
<dbReference type="EMBL" id="BC006581">
    <property type="protein sequence ID" value="AAH06581.1"/>
    <property type="molecule type" value="mRNA"/>
</dbReference>
<dbReference type="CCDS" id="CCDS25451.1"/>
<dbReference type="RefSeq" id="NP_598785.1">
    <property type="nucleotide sequence ID" value="NM_134024.3"/>
</dbReference>
<dbReference type="SMR" id="P83887"/>
<dbReference type="BioGRID" id="222149">
    <property type="interactions" value="114"/>
</dbReference>
<dbReference type="FunCoup" id="P83887">
    <property type="interactions" value="3111"/>
</dbReference>
<dbReference type="IntAct" id="P83887">
    <property type="interactions" value="106"/>
</dbReference>
<dbReference type="MINT" id="P83887"/>
<dbReference type="STRING" id="10090.ENSMUSP00000048036"/>
<dbReference type="iPTMnet" id="P83887"/>
<dbReference type="PhosphoSitePlus" id="P83887"/>
<dbReference type="SwissPalm" id="P83887"/>
<dbReference type="PaxDb" id="10090-ENSMUSP00000048036"/>
<dbReference type="PeptideAtlas" id="P83887"/>
<dbReference type="ProteomicsDB" id="263083"/>
<dbReference type="Pumba" id="P83887"/>
<dbReference type="Antibodypedia" id="3898">
    <property type="antibodies" value="607 antibodies from 42 providers"/>
</dbReference>
<dbReference type="DNASU" id="103733"/>
<dbReference type="Ensembl" id="ENSMUST00000043680.9">
    <property type="protein sequence ID" value="ENSMUSP00000048036.9"/>
    <property type="gene ID" value="ENSMUSG00000035198.10"/>
</dbReference>
<dbReference type="GeneID" id="103733"/>
<dbReference type="KEGG" id="mmu:103733"/>
<dbReference type="UCSC" id="uc007lnk.1">
    <property type="organism name" value="mouse"/>
</dbReference>
<dbReference type="AGR" id="MGI:101834"/>
<dbReference type="CTD" id="7283"/>
<dbReference type="MGI" id="MGI:101834">
    <property type="gene designation" value="Tubg1"/>
</dbReference>
<dbReference type="VEuPathDB" id="HostDB:ENSMUSG00000035198"/>
<dbReference type="eggNOG" id="KOG1374">
    <property type="taxonomic scope" value="Eukaryota"/>
</dbReference>
<dbReference type="GeneTree" id="ENSGT00940000156957"/>
<dbReference type="HOGENOM" id="CLU_015718_1_0_1"/>
<dbReference type="InParanoid" id="P83887"/>
<dbReference type="OMA" id="HRYISIL"/>
<dbReference type="OrthoDB" id="10249382at2759"/>
<dbReference type="PhylomeDB" id="P83887"/>
<dbReference type="TreeFam" id="TF300477"/>
<dbReference type="Reactome" id="R-MMU-2565942">
    <property type="pathway name" value="Regulation of PLK1 Activity at G2/M Transition"/>
</dbReference>
<dbReference type="Reactome" id="R-MMU-380259">
    <property type="pathway name" value="Loss of Nlp from mitotic centrosomes"/>
</dbReference>
<dbReference type="Reactome" id="R-MMU-380270">
    <property type="pathway name" value="Recruitment of mitotic centrosome proteins and complexes"/>
</dbReference>
<dbReference type="Reactome" id="R-MMU-380284">
    <property type="pathway name" value="Loss of proteins required for interphase microtubule organization from the centrosome"/>
</dbReference>
<dbReference type="Reactome" id="R-MMU-380320">
    <property type="pathway name" value="Recruitment of NuMA to mitotic centrosomes"/>
</dbReference>
<dbReference type="Reactome" id="R-MMU-5620912">
    <property type="pathway name" value="Anchoring of the basal body to the plasma membrane"/>
</dbReference>
<dbReference type="Reactome" id="R-MMU-8854518">
    <property type="pathway name" value="AURKA Activation by TPX2"/>
</dbReference>
<dbReference type="BioGRID-ORCS" id="103733">
    <property type="hits" value="27 hits in 78 CRISPR screens"/>
</dbReference>
<dbReference type="CD-CODE" id="01CA17F3">
    <property type="entry name" value="Centrosome"/>
</dbReference>
<dbReference type="ChiTaRS" id="Tubg1">
    <property type="organism name" value="mouse"/>
</dbReference>
<dbReference type="PRO" id="PR:P83887"/>
<dbReference type="Proteomes" id="UP000000589">
    <property type="component" value="Chromosome 11"/>
</dbReference>
<dbReference type="RNAct" id="P83887">
    <property type="molecule type" value="protein"/>
</dbReference>
<dbReference type="Bgee" id="ENSMUSG00000035198">
    <property type="expression patterns" value="Expressed in embryonic post-anal tail and 258 other cell types or tissues"/>
</dbReference>
<dbReference type="ExpressionAtlas" id="P83887">
    <property type="expression patterns" value="baseline and differential"/>
</dbReference>
<dbReference type="GO" id="GO:0045177">
    <property type="term" value="C:apical part of cell"/>
    <property type="evidence" value="ECO:0000314"/>
    <property type="project" value="MGI"/>
</dbReference>
<dbReference type="GO" id="GO:0031252">
    <property type="term" value="C:cell leading edge"/>
    <property type="evidence" value="ECO:0000314"/>
    <property type="project" value="MGI"/>
</dbReference>
<dbReference type="GO" id="GO:0005814">
    <property type="term" value="C:centriole"/>
    <property type="evidence" value="ECO:0000314"/>
    <property type="project" value="MGI"/>
</dbReference>
<dbReference type="GO" id="GO:0005813">
    <property type="term" value="C:centrosome"/>
    <property type="evidence" value="ECO:0000314"/>
    <property type="project" value="MGI"/>
</dbReference>
<dbReference type="GO" id="GO:0036064">
    <property type="term" value="C:ciliary basal body"/>
    <property type="evidence" value="ECO:0000314"/>
    <property type="project" value="MGI"/>
</dbReference>
<dbReference type="GO" id="GO:0005929">
    <property type="term" value="C:cilium"/>
    <property type="evidence" value="ECO:0000314"/>
    <property type="project" value="MGI"/>
</dbReference>
<dbReference type="GO" id="GO:0000794">
    <property type="term" value="C:condensed nuclear chromosome"/>
    <property type="evidence" value="ECO:0000314"/>
    <property type="project" value="UniProtKB"/>
</dbReference>
<dbReference type="GO" id="GO:0005737">
    <property type="term" value="C:cytoplasm"/>
    <property type="evidence" value="ECO:0000314"/>
    <property type="project" value="UniProtKB"/>
</dbReference>
<dbReference type="GO" id="GO:0005881">
    <property type="term" value="C:cytoplasmic microtubule"/>
    <property type="evidence" value="ECO:0000314"/>
    <property type="project" value="MGI"/>
</dbReference>
<dbReference type="GO" id="GO:0000930">
    <property type="term" value="C:gamma-tubulin complex"/>
    <property type="evidence" value="ECO:0007669"/>
    <property type="project" value="Ensembl"/>
</dbReference>
<dbReference type="GO" id="GO:0005815">
    <property type="term" value="C:microtubule organizing center"/>
    <property type="evidence" value="ECO:0000304"/>
    <property type="project" value="UniProtKB"/>
</dbReference>
<dbReference type="GO" id="GO:1990498">
    <property type="term" value="C:mitotic spindle microtubule"/>
    <property type="evidence" value="ECO:0000250"/>
    <property type="project" value="UniProtKB"/>
</dbReference>
<dbReference type="GO" id="GO:0043005">
    <property type="term" value="C:neuron projection"/>
    <property type="evidence" value="ECO:0000314"/>
    <property type="project" value="MGI"/>
</dbReference>
<dbReference type="GO" id="GO:0097730">
    <property type="term" value="C:non-motile cilium"/>
    <property type="evidence" value="ECO:0000314"/>
    <property type="project" value="MGI"/>
</dbReference>
<dbReference type="GO" id="GO:0000242">
    <property type="term" value="C:pericentriolar material"/>
    <property type="evidence" value="ECO:0000314"/>
    <property type="project" value="MGI"/>
</dbReference>
<dbReference type="GO" id="GO:0005827">
    <property type="term" value="C:polar microtubule"/>
    <property type="evidence" value="ECO:0000250"/>
    <property type="project" value="UniProtKB"/>
</dbReference>
<dbReference type="GO" id="GO:0055037">
    <property type="term" value="C:recycling endosome"/>
    <property type="evidence" value="ECO:0007669"/>
    <property type="project" value="Ensembl"/>
</dbReference>
<dbReference type="GO" id="GO:0005876">
    <property type="term" value="C:spindle microtubule"/>
    <property type="evidence" value="ECO:0000314"/>
    <property type="project" value="MGI"/>
</dbReference>
<dbReference type="GO" id="GO:0000922">
    <property type="term" value="C:spindle pole"/>
    <property type="evidence" value="ECO:0000304"/>
    <property type="project" value="UniProtKB"/>
</dbReference>
<dbReference type="GO" id="GO:0005525">
    <property type="term" value="F:GTP binding"/>
    <property type="evidence" value="ECO:0007669"/>
    <property type="project" value="UniProtKB-KW"/>
</dbReference>
<dbReference type="GO" id="GO:0042802">
    <property type="term" value="F:identical protein binding"/>
    <property type="evidence" value="ECO:0007669"/>
    <property type="project" value="Ensembl"/>
</dbReference>
<dbReference type="GO" id="GO:0005200">
    <property type="term" value="F:structural constituent of cytoskeleton"/>
    <property type="evidence" value="ECO:0000304"/>
    <property type="project" value="UniProtKB"/>
</dbReference>
<dbReference type="GO" id="GO:0031122">
    <property type="term" value="P:cytoplasmic microtubule organization"/>
    <property type="evidence" value="ECO:0007669"/>
    <property type="project" value="InterPro"/>
</dbReference>
<dbReference type="GO" id="GO:0000212">
    <property type="term" value="P:meiotic spindle organization"/>
    <property type="evidence" value="ECO:0000270"/>
    <property type="project" value="UniProtKB"/>
</dbReference>
<dbReference type="GO" id="GO:0007020">
    <property type="term" value="P:microtubule nucleation"/>
    <property type="evidence" value="ECO:0000304"/>
    <property type="project" value="UniProtKB"/>
</dbReference>
<dbReference type="GO" id="GO:0007052">
    <property type="term" value="P:mitotic spindle organization"/>
    <property type="evidence" value="ECO:0000304"/>
    <property type="project" value="UniProtKB"/>
</dbReference>
<dbReference type="GO" id="GO:0007088">
    <property type="term" value="P:regulation of mitotic nuclear division"/>
    <property type="evidence" value="ECO:0000304"/>
    <property type="project" value="UniProtKB"/>
</dbReference>
<dbReference type="CDD" id="cd02188">
    <property type="entry name" value="gamma_tubulin"/>
    <property type="match status" value="1"/>
</dbReference>
<dbReference type="FunFam" id="1.10.287.600:FF:000004">
    <property type="entry name" value="Tubulin gamma chain"/>
    <property type="match status" value="1"/>
</dbReference>
<dbReference type="FunFam" id="3.30.1330.20:FF:000003">
    <property type="entry name" value="Tubulin gamma chain"/>
    <property type="match status" value="1"/>
</dbReference>
<dbReference type="FunFam" id="3.40.50.1440:FF:000010">
    <property type="entry name" value="Tubulin gamma chain"/>
    <property type="match status" value="1"/>
</dbReference>
<dbReference type="Gene3D" id="1.10.287.600">
    <property type="entry name" value="Helix hairpin bin"/>
    <property type="match status" value="1"/>
</dbReference>
<dbReference type="Gene3D" id="3.30.1330.20">
    <property type="entry name" value="Tubulin/FtsZ, C-terminal domain"/>
    <property type="match status" value="1"/>
</dbReference>
<dbReference type="Gene3D" id="3.40.50.1440">
    <property type="entry name" value="Tubulin/FtsZ, GTPase domain"/>
    <property type="match status" value="1"/>
</dbReference>
<dbReference type="InterPro" id="IPR002454">
    <property type="entry name" value="Gamma_tubulin"/>
</dbReference>
<dbReference type="InterPro" id="IPR008280">
    <property type="entry name" value="Tub_FtsZ_C"/>
</dbReference>
<dbReference type="InterPro" id="IPR000217">
    <property type="entry name" value="Tubulin"/>
</dbReference>
<dbReference type="InterPro" id="IPR037103">
    <property type="entry name" value="Tubulin/FtsZ-like_C"/>
</dbReference>
<dbReference type="InterPro" id="IPR018316">
    <property type="entry name" value="Tubulin/FtsZ_2-layer-sand-dom"/>
</dbReference>
<dbReference type="InterPro" id="IPR036525">
    <property type="entry name" value="Tubulin/FtsZ_GTPase_sf"/>
</dbReference>
<dbReference type="InterPro" id="IPR023123">
    <property type="entry name" value="Tubulin_C"/>
</dbReference>
<dbReference type="InterPro" id="IPR017975">
    <property type="entry name" value="Tubulin_CS"/>
</dbReference>
<dbReference type="InterPro" id="IPR003008">
    <property type="entry name" value="Tubulin_FtsZ_GTPase"/>
</dbReference>
<dbReference type="PANTHER" id="PTHR11588">
    <property type="entry name" value="TUBULIN"/>
    <property type="match status" value="1"/>
</dbReference>
<dbReference type="Pfam" id="PF00091">
    <property type="entry name" value="Tubulin"/>
    <property type="match status" value="1"/>
</dbReference>
<dbReference type="Pfam" id="PF03953">
    <property type="entry name" value="Tubulin_C"/>
    <property type="match status" value="1"/>
</dbReference>
<dbReference type="PRINTS" id="PR01164">
    <property type="entry name" value="GAMMATUBULIN"/>
</dbReference>
<dbReference type="PRINTS" id="PR01161">
    <property type="entry name" value="TUBULIN"/>
</dbReference>
<dbReference type="SMART" id="SM00864">
    <property type="entry name" value="Tubulin"/>
    <property type="match status" value="1"/>
</dbReference>
<dbReference type="SMART" id="SM00865">
    <property type="entry name" value="Tubulin_C"/>
    <property type="match status" value="1"/>
</dbReference>
<dbReference type="SUPFAM" id="SSF55307">
    <property type="entry name" value="Tubulin C-terminal domain-like"/>
    <property type="match status" value="1"/>
</dbReference>
<dbReference type="SUPFAM" id="SSF52490">
    <property type="entry name" value="Tubulin nucleotide-binding domain-like"/>
    <property type="match status" value="1"/>
</dbReference>
<dbReference type="PROSITE" id="PS00227">
    <property type="entry name" value="TUBULIN"/>
    <property type="match status" value="1"/>
</dbReference>
<evidence type="ECO:0000250" key="1">
    <source>
        <dbReference type="UniProtKB" id="P23258"/>
    </source>
</evidence>
<evidence type="ECO:0000250" key="2">
    <source>
        <dbReference type="UniProtKB" id="P83888"/>
    </source>
</evidence>
<evidence type="ECO:0000255" key="3"/>
<evidence type="ECO:0000269" key="4">
    <source>
    </source>
</evidence>
<evidence type="ECO:0000269" key="5">
    <source>
    </source>
</evidence>
<evidence type="ECO:0000269" key="6">
    <source>
    </source>
</evidence>
<evidence type="ECO:0000305" key="7"/>
<evidence type="ECO:0000312" key="8">
    <source>
        <dbReference type="MGI" id="MGI:101834"/>
    </source>
</evidence>
<proteinExistence type="evidence at protein level"/>
<name>TBG1_MOUSE</name>